<sequence>MSVKRSVSEIEIESVQDQPSVAVGSFFKGFRAPSDTTFDLYKKKKSEKDEFVLHGENERLEYEGYTDSSSQASNQYVVGLFNPEKKSIQLYKAPVLVSKVVSKSSKNLRGPKIKSKSDTRPSALRNALGEAFGTKKAKKAIADLERNRIDSDKLTDSAIDIVDSVRTASKDLPTRAQLDEITSNDRPTPLANIDATDVEQIYPIESIIPKKELQFIRVSSILKEADKEKKLELFPYQNNSKYVAKKLDSLTQPSQMTKLQLLYYLSLLLGVYENRRVNNKTKLLERLNSPPEILVDGILSRFTVIKPGQFGRSKDRSYFIDPQNEDKILCYILAIIMHLDNFIVEITPLAHELNLKPSKVVSLFRVLGAIVKGATVAQAEAFGIPKSTAASYKIATMKVPFKLPEMTRRGRGPRR</sequence>
<accession>Q01080</accession>
<accession>D6W0U5</accession>
<feature type="chain" id="PRO_0000073955" description="DNA-directed RNA polymerase I subunit RPA49">
    <location>
        <begin position="1"/>
        <end position="415"/>
    </location>
</feature>
<feature type="region of interest" description="Interaction with DNA">
    <location>
        <begin position="322"/>
        <end position="415"/>
    </location>
</feature>
<feature type="modified residue" description="Phosphoserine" evidence="9">
    <location>
        <position position="34"/>
    </location>
</feature>
<feature type="modified residue" description="Phosphoserine" evidence="10">
    <location>
        <position position="151"/>
    </location>
</feature>
<feature type="mutagenesis site" description="No effect on DNA binding." evidence="5">
    <original>ED</original>
    <variation>AA</variation>
    <location>
        <begin position="325"/>
        <end position="326"/>
    </location>
</feature>
<feature type="mutagenesis site" description="Loss of DNA binding; when associated with A-358." evidence="5">
    <original>K</original>
    <variation>A</variation>
    <location>
        <position position="356"/>
    </location>
</feature>
<feature type="mutagenesis site" description="Loss of DNA binding; when associated with A-356." evidence="5">
    <original>S</original>
    <variation>A</variation>
    <location>
        <position position="358"/>
    </location>
</feature>
<feature type="mutagenesis site" description="Loss of DNA binding." evidence="5">
    <original>K</original>
    <variation>A</variation>
    <location>
        <position position="359"/>
    </location>
</feature>
<feature type="mutagenesis site" description="Loss of DNA binding." evidence="5">
    <original>R</original>
    <variation>A</variation>
    <location>
        <position position="365"/>
    </location>
</feature>
<feature type="mutagenesis site" description="Loss of DNA binding." evidence="5">
    <original>K</original>
    <variation>A</variation>
    <location>
        <position position="393"/>
    </location>
</feature>
<feature type="sequence conflict" description="In Ref. 1; AAA34380." evidence="8" ref="1">
    <original>T</original>
    <variation>P</variation>
    <location>
        <position position="66"/>
    </location>
</feature>
<feature type="sequence conflict" description="In Ref. 1; AAA34380." evidence="8" ref="1">
    <original>S</original>
    <variation>C</variation>
    <location>
        <position position="157"/>
    </location>
</feature>
<feature type="strand" evidence="14">
    <location>
        <begin position="11"/>
        <end position="16"/>
    </location>
</feature>
<feature type="strand" evidence="14">
    <location>
        <begin position="22"/>
        <end position="25"/>
    </location>
</feature>
<feature type="strand" evidence="15">
    <location>
        <begin position="27"/>
        <end position="29"/>
    </location>
</feature>
<feature type="strand" evidence="15">
    <location>
        <begin position="34"/>
        <end position="36"/>
    </location>
</feature>
<feature type="strand" evidence="14">
    <location>
        <begin position="37"/>
        <end position="43"/>
    </location>
</feature>
<feature type="strand" evidence="13">
    <location>
        <begin position="45"/>
        <end position="48"/>
    </location>
</feature>
<feature type="strand" evidence="14">
    <location>
        <begin position="50"/>
        <end position="56"/>
    </location>
</feature>
<feature type="strand" evidence="14">
    <location>
        <begin position="58"/>
        <end position="65"/>
    </location>
</feature>
<feature type="helix" evidence="14">
    <location>
        <begin position="68"/>
        <end position="71"/>
    </location>
</feature>
<feature type="strand" evidence="14">
    <location>
        <begin position="74"/>
        <end position="81"/>
    </location>
</feature>
<feature type="turn" evidence="14">
    <location>
        <begin position="83"/>
        <end position="85"/>
    </location>
</feature>
<feature type="strand" evidence="14">
    <location>
        <begin position="86"/>
        <end position="93"/>
    </location>
</feature>
<feature type="strand" evidence="14">
    <location>
        <begin position="95"/>
        <end position="98"/>
    </location>
</feature>
<feature type="helix" evidence="12">
    <location>
        <begin position="103"/>
        <end position="106"/>
    </location>
</feature>
<feature type="turn" evidence="16">
    <location>
        <begin position="120"/>
        <end position="122"/>
    </location>
</feature>
<feature type="helix" evidence="16">
    <location>
        <begin position="127"/>
        <end position="130"/>
    </location>
</feature>
<feature type="turn" evidence="16">
    <location>
        <begin position="133"/>
        <end position="137"/>
    </location>
</feature>
<feature type="helix" evidence="16">
    <location>
        <begin position="138"/>
        <end position="144"/>
    </location>
</feature>
<feature type="turn" evidence="16">
    <location>
        <begin position="152"/>
        <end position="154"/>
    </location>
</feature>
<feature type="helix" evidence="16">
    <location>
        <begin position="155"/>
        <end position="157"/>
    </location>
</feature>
<feature type="helix" evidence="16">
    <location>
        <begin position="159"/>
        <end position="168"/>
    </location>
</feature>
<feature type="helix" evidence="11">
    <location>
        <begin position="173"/>
        <end position="184"/>
    </location>
</feature>
<feature type="helix" evidence="11">
    <location>
        <begin position="198"/>
        <end position="200"/>
    </location>
</feature>
<feature type="helix" evidence="11">
    <location>
        <begin position="204"/>
        <end position="207"/>
    </location>
</feature>
<feature type="helix" evidence="11">
    <location>
        <begin position="210"/>
        <end position="213"/>
    </location>
</feature>
<feature type="helix" evidence="11">
    <location>
        <begin position="219"/>
        <end position="223"/>
    </location>
</feature>
<feature type="helix" evidence="11">
    <location>
        <begin position="227"/>
        <end position="232"/>
    </location>
</feature>
<feature type="helix" evidence="11">
    <location>
        <begin position="242"/>
        <end position="247"/>
    </location>
</feature>
<feature type="helix" evidence="11">
    <location>
        <begin position="253"/>
        <end position="255"/>
    </location>
</feature>
<feature type="helix" evidence="11">
    <location>
        <begin position="256"/>
        <end position="273"/>
    </location>
</feature>
<feature type="turn" evidence="11">
    <location>
        <begin position="274"/>
        <end position="276"/>
    </location>
</feature>
<feature type="helix" evidence="11">
    <location>
        <begin position="280"/>
        <end position="284"/>
    </location>
</feature>
<feature type="helix" evidence="11">
    <location>
        <begin position="292"/>
        <end position="302"/>
    </location>
</feature>
<feature type="strand" evidence="11">
    <location>
        <begin position="303"/>
        <end position="305"/>
    </location>
</feature>
<feature type="helix" evidence="11">
    <location>
        <begin position="309"/>
        <end position="314"/>
    </location>
</feature>
<feature type="strand" evidence="11">
    <location>
        <begin position="317"/>
        <end position="319"/>
    </location>
</feature>
<feature type="helix" evidence="11">
    <location>
        <begin position="322"/>
        <end position="339"/>
    </location>
</feature>
<feature type="turn" evidence="11">
    <location>
        <begin position="340"/>
        <end position="342"/>
    </location>
</feature>
<feature type="strand" evidence="11">
    <location>
        <begin position="343"/>
        <end position="345"/>
    </location>
</feature>
<feature type="helix" evidence="11">
    <location>
        <begin position="346"/>
        <end position="353"/>
    </location>
</feature>
<feature type="helix" evidence="11">
    <location>
        <begin position="357"/>
        <end position="366"/>
    </location>
</feature>
<feature type="strand" evidence="11">
    <location>
        <begin position="370"/>
        <end position="373"/>
    </location>
</feature>
<feature type="helix" evidence="11">
    <location>
        <begin position="376"/>
        <end position="382"/>
    </location>
</feature>
<feature type="helix" evidence="11">
    <location>
        <begin position="386"/>
        <end position="391"/>
    </location>
</feature>
<feature type="strand" evidence="11">
    <location>
        <begin position="392"/>
        <end position="396"/>
    </location>
</feature>
<proteinExistence type="evidence at protein level"/>
<comment type="function">
    <text evidence="4 5 6 7">DNA-dependent RNA polymerases catalyze the transcription of DNA into RNA using the four ribonucleoside triphosphates as substrates. Component of RNA polymerase I (Pol I) which synthesizes ribosomal RNA precursors. Besides, RNA polymerase I has intrinsic RNA cleavage activity. The heterodimer formed by RPA34 and RPA49 stimulates transcript elongation by Pol I. Subunit RPA49 can bind both single-stranded and double-stranded DNA.</text>
</comment>
<comment type="subunit">
    <text evidence="1 2 4 5 6 7">Component of the RNA polymerase I (Pol I) complex consisting of 14 subunits: RPA135, RPA190, RPC40, RPA14, RPB5, RPO26, RPA43, RPB8, RPA12, RPB10, RPC19, RPC10, RPA49 and RPA34. The complex is composed of a horseshoe-shaped core containing ten subunits (RPA135, RPA190, RPB5, RPO26, RPB8, RPB10, RPC10, RPA12, RPC19 and RPC40) where RPA135 and RPA190 form the DNA-binding cleft. Outside of the core, RPA14 and RPA43 form the stalk that mediates interactions with transcription initiation factors and newly synthesized RNA. Forms a TFIIF-like heterodimer with RPA34; the heterodimer formed by RPA34 and RPA49 can be dissociated from the Pol I core giving rise to a 12 subunit form A* of Pol I (formerly called pol A) that shows impaired transcript elongation activity and increased sensitivity to alpha-amanitin. The heterodimer formed by RPA34 and RPA49 stabilizes subunit RPA12 and stimulates RPA12-dependent RNA cleavage.</text>
</comment>
<comment type="subcellular location">
    <subcellularLocation>
        <location evidence="3">Nucleus</location>
        <location evidence="3">Nucleolus</location>
    </subcellularLocation>
</comment>
<comment type="similarity">
    <text evidence="8">Belongs to the eukaryotic RPA49/POLR1E RNA polymerase subunit family.</text>
</comment>
<protein>
    <recommendedName>
        <fullName>DNA-directed RNA polymerase I subunit RPA49</fullName>
        <shortName>A49</shortName>
    </recommendedName>
    <alternativeName>
        <fullName>DNA-directed RNA polymerase I 49 kDa polypeptide</fullName>
    </alternativeName>
</protein>
<gene>
    <name type="primary">RPA49</name>
    <name type="synonym">RRN13</name>
    <name type="ordered locus">YNL248C</name>
    <name type="ORF">N0880</name>
</gene>
<organism>
    <name type="scientific">Saccharomyces cerevisiae (strain ATCC 204508 / S288c)</name>
    <name type="common">Baker's yeast</name>
    <dbReference type="NCBI Taxonomy" id="559292"/>
    <lineage>
        <taxon>Eukaryota</taxon>
        <taxon>Fungi</taxon>
        <taxon>Dikarya</taxon>
        <taxon>Ascomycota</taxon>
        <taxon>Saccharomycotina</taxon>
        <taxon>Saccharomycetes</taxon>
        <taxon>Saccharomycetales</taxon>
        <taxon>Saccharomycetaceae</taxon>
        <taxon>Saccharomyces</taxon>
    </lineage>
</organism>
<dbReference type="EMBL" id="M96600">
    <property type="protein sequence ID" value="AAA34380.1"/>
    <property type="molecule type" value="Genomic_DNA"/>
</dbReference>
<dbReference type="EMBL" id="X96722">
    <property type="protein sequence ID" value="CAA65496.1"/>
    <property type="molecule type" value="Genomic_DNA"/>
</dbReference>
<dbReference type="EMBL" id="Z71524">
    <property type="protein sequence ID" value="CAA96155.1"/>
    <property type="molecule type" value="Genomic_DNA"/>
</dbReference>
<dbReference type="EMBL" id="AY558027">
    <property type="protein sequence ID" value="AAS56353.1"/>
    <property type="molecule type" value="Genomic_DNA"/>
</dbReference>
<dbReference type="EMBL" id="BK006947">
    <property type="protein sequence ID" value="DAA10311.1"/>
    <property type="molecule type" value="Genomic_DNA"/>
</dbReference>
<dbReference type="PIR" id="S63221">
    <property type="entry name" value="S63221"/>
</dbReference>
<dbReference type="RefSeq" id="NP_014151.1">
    <property type="nucleotide sequence ID" value="NM_001183086.1"/>
</dbReference>
<dbReference type="PDB" id="3NFH">
    <property type="method" value="X-ray"/>
    <property type="resolution" value="2.17 A"/>
    <property type="chains" value="A/B=154-399"/>
</dbReference>
<dbReference type="PDB" id="3NFI">
    <property type="method" value="X-ray"/>
    <property type="resolution" value="1.90 A"/>
    <property type="chains" value="A/B/C/D/E=171-403"/>
</dbReference>
<dbReference type="PDB" id="4C2M">
    <property type="method" value="X-ray"/>
    <property type="resolution" value="2.80 A"/>
    <property type="chains" value="2/M=1-415"/>
</dbReference>
<dbReference type="PDB" id="4C3H">
    <property type="method" value="X-ray"/>
    <property type="resolution" value="3.27 A"/>
    <property type="chains" value="M=1-415"/>
</dbReference>
<dbReference type="PDB" id="4C3I">
    <property type="method" value="X-ray"/>
    <property type="resolution" value="3.00 A"/>
    <property type="chains" value="M=1-415"/>
</dbReference>
<dbReference type="PDB" id="4C3J">
    <property type="method" value="X-ray"/>
    <property type="resolution" value="3.35 A"/>
    <property type="chains" value="M=1-415"/>
</dbReference>
<dbReference type="PDB" id="4YM7">
    <property type="method" value="X-ray"/>
    <property type="resolution" value="5.50 A"/>
    <property type="chains" value="AM/BM/CM/DM/EM/FM=1-415"/>
</dbReference>
<dbReference type="PDB" id="5G5L">
    <property type="method" value="EM"/>
    <property type="resolution" value="4.80 A"/>
    <property type="chains" value="M=1-415"/>
</dbReference>
<dbReference type="PDB" id="5LMX">
    <property type="method" value="EM"/>
    <property type="resolution" value="4.90 A"/>
    <property type="chains" value="M=1-415"/>
</dbReference>
<dbReference type="PDB" id="5M3F">
    <property type="method" value="EM"/>
    <property type="resolution" value="3.80 A"/>
    <property type="chains" value="M=1-415"/>
</dbReference>
<dbReference type="PDB" id="5M3M">
    <property type="method" value="EM"/>
    <property type="resolution" value="4.00 A"/>
    <property type="chains" value="M=1-415"/>
</dbReference>
<dbReference type="PDB" id="5M5W">
    <property type="method" value="EM"/>
    <property type="resolution" value="3.80 A"/>
    <property type="chains" value="M=1-415"/>
</dbReference>
<dbReference type="PDB" id="5M5X">
    <property type="method" value="EM"/>
    <property type="resolution" value="4.00 A"/>
    <property type="chains" value="M=1-415"/>
</dbReference>
<dbReference type="PDB" id="5M5Y">
    <property type="method" value="EM"/>
    <property type="resolution" value="4.00 A"/>
    <property type="chains" value="M=1-415"/>
</dbReference>
<dbReference type="PDB" id="5M64">
    <property type="method" value="EM"/>
    <property type="resolution" value="4.60 A"/>
    <property type="chains" value="M=1-415"/>
</dbReference>
<dbReference type="PDB" id="5N5Y">
    <property type="method" value="EM"/>
    <property type="resolution" value="7.70 A"/>
    <property type="chains" value="M=1-415"/>
</dbReference>
<dbReference type="PDB" id="5N5Z">
    <property type="method" value="EM"/>
    <property type="resolution" value="7.70 A"/>
    <property type="chains" value="M=1-415"/>
</dbReference>
<dbReference type="PDB" id="5N60">
    <property type="method" value="EM"/>
    <property type="resolution" value="7.70 A"/>
    <property type="chains" value="M=1-415"/>
</dbReference>
<dbReference type="PDB" id="5N61">
    <property type="method" value="EM"/>
    <property type="resolution" value="3.40 A"/>
    <property type="chains" value="M=1-415"/>
</dbReference>
<dbReference type="PDB" id="5OA1">
    <property type="method" value="EM"/>
    <property type="resolution" value="4.40 A"/>
    <property type="chains" value="M=1-415"/>
</dbReference>
<dbReference type="PDB" id="5W5Y">
    <property type="method" value="EM"/>
    <property type="resolution" value="3.80 A"/>
    <property type="chains" value="M=1-415"/>
</dbReference>
<dbReference type="PDB" id="5W64">
    <property type="method" value="EM"/>
    <property type="resolution" value="4.20 A"/>
    <property type="chains" value="M=1-415"/>
</dbReference>
<dbReference type="PDB" id="5W65">
    <property type="method" value="EM"/>
    <property type="resolution" value="4.30 A"/>
    <property type="chains" value="M=1-415"/>
</dbReference>
<dbReference type="PDB" id="5W66">
    <property type="method" value="EM"/>
    <property type="resolution" value="3.90 A"/>
    <property type="chains" value="M=1-415"/>
</dbReference>
<dbReference type="PDB" id="6H67">
    <property type="method" value="EM"/>
    <property type="resolution" value="3.60 A"/>
    <property type="chains" value="M=1-415"/>
</dbReference>
<dbReference type="PDB" id="6H68">
    <property type="method" value="EM"/>
    <property type="resolution" value="4.60 A"/>
    <property type="chains" value="M=1-415"/>
</dbReference>
<dbReference type="PDB" id="6HKO">
    <property type="method" value="EM"/>
    <property type="resolution" value="3.42 A"/>
    <property type="chains" value="M=1-415"/>
</dbReference>
<dbReference type="PDB" id="6RQH">
    <property type="method" value="EM"/>
    <property type="resolution" value="3.70 A"/>
    <property type="chains" value="M=1-415"/>
</dbReference>
<dbReference type="PDB" id="6RQL">
    <property type="method" value="EM"/>
    <property type="resolution" value="2.90 A"/>
    <property type="chains" value="M=1-415"/>
</dbReference>
<dbReference type="PDB" id="6RQT">
    <property type="method" value="EM"/>
    <property type="resolution" value="4.00 A"/>
    <property type="chains" value="M=1-415"/>
</dbReference>
<dbReference type="PDB" id="6RRD">
    <property type="method" value="EM"/>
    <property type="resolution" value="3.10 A"/>
    <property type="chains" value="M=1-415"/>
</dbReference>
<dbReference type="PDB" id="6RUI">
    <property type="method" value="EM"/>
    <property type="resolution" value="2.70 A"/>
    <property type="chains" value="M=1-415"/>
</dbReference>
<dbReference type="PDB" id="6RUO">
    <property type="method" value="EM"/>
    <property type="resolution" value="3.50 A"/>
    <property type="chains" value="M=1-415"/>
</dbReference>
<dbReference type="PDB" id="6RWE">
    <property type="method" value="EM"/>
    <property type="resolution" value="3.00 A"/>
    <property type="chains" value="M=1-415"/>
</dbReference>
<dbReference type="PDB" id="6TPS">
    <property type="method" value="EM"/>
    <property type="resolution" value="3.54 A"/>
    <property type="chains" value="M=1-415"/>
</dbReference>
<dbReference type="PDBsum" id="3NFH"/>
<dbReference type="PDBsum" id="3NFI"/>
<dbReference type="PDBsum" id="4C2M"/>
<dbReference type="PDBsum" id="4C3H"/>
<dbReference type="PDBsum" id="4C3I"/>
<dbReference type="PDBsum" id="4C3J"/>
<dbReference type="PDBsum" id="4YM7"/>
<dbReference type="PDBsum" id="5G5L"/>
<dbReference type="PDBsum" id="5LMX"/>
<dbReference type="PDBsum" id="5M3F"/>
<dbReference type="PDBsum" id="5M3M"/>
<dbReference type="PDBsum" id="5M5W"/>
<dbReference type="PDBsum" id="5M5X"/>
<dbReference type="PDBsum" id="5M5Y"/>
<dbReference type="PDBsum" id="5M64"/>
<dbReference type="PDBsum" id="5N5Y"/>
<dbReference type="PDBsum" id="5N5Z"/>
<dbReference type="PDBsum" id="5N60"/>
<dbReference type="PDBsum" id="5N61"/>
<dbReference type="PDBsum" id="5OA1"/>
<dbReference type="PDBsum" id="5W5Y"/>
<dbReference type="PDBsum" id="5W64"/>
<dbReference type="PDBsum" id="5W65"/>
<dbReference type="PDBsum" id="5W66"/>
<dbReference type="PDBsum" id="6H67"/>
<dbReference type="PDBsum" id="6H68"/>
<dbReference type="PDBsum" id="6HKO"/>
<dbReference type="PDBsum" id="6RQH"/>
<dbReference type="PDBsum" id="6RQL"/>
<dbReference type="PDBsum" id="6RQT"/>
<dbReference type="PDBsum" id="6RRD"/>
<dbReference type="PDBsum" id="6RUI"/>
<dbReference type="PDBsum" id="6RUO"/>
<dbReference type="PDBsum" id="6RWE"/>
<dbReference type="PDBsum" id="6TPS"/>
<dbReference type="EMDB" id="EMD-0146"/>
<dbReference type="EMDB" id="EMD-0147"/>
<dbReference type="EMDB" id="EMD-0238"/>
<dbReference type="EMDB" id="EMD-10006"/>
<dbReference type="EMDB" id="EMD-10007"/>
<dbReference type="EMDB" id="EMD-10038"/>
<dbReference type="EMDB" id="EMD-10544"/>
<dbReference type="EMDB" id="EMD-3446"/>
<dbReference type="EMDB" id="EMD-3447"/>
<dbReference type="EMDB" id="EMD-3448"/>
<dbReference type="EMDB" id="EMD-3449"/>
<dbReference type="EMDB" id="EMD-3590"/>
<dbReference type="EMDB" id="EMD-3591"/>
<dbReference type="EMDB" id="EMD-3592"/>
<dbReference type="EMDB" id="EMD-3593"/>
<dbReference type="EMDB" id="EMD-4088"/>
<dbReference type="EMDB" id="EMD-4147"/>
<dbReference type="EMDB" id="EMD-4148"/>
<dbReference type="EMDB" id="EMD-4982"/>
<dbReference type="EMDB" id="EMD-4984"/>
<dbReference type="EMDB" id="EMD-4985"/>
<dbReference type="EMDB" id="EMD-4987"/>
<dbReference type="EMDB" id="EMD-8771"/>
<dbReference type="EMDB" id="EMD-8773"/>
<dbReference type="EMDB" id="EMD-8774"/>
<dbReference type="EMDB" id="EMD-8775"/>
<dbReference type="EMDB" id="EMD-8776"/>
<dbReference type="EMDB" id="EMD-8777"/>
<dbReference type="SMR" id="Q01080"/>
<dbReference type="BioGRID" id="35591">
    <property type="interactions" value="537"/>
</dbReference>
<dbReference type="ComplexPortal" id="CPX-1664">
    <property type="entry name" value="DNA-directed RNA Polymerase I complex"/>
</dbReference>
<dbReference type="DIP" id="DIP-6577N"/>
<dbReference type="FunCoup" id="Q01080">
    <property type="interactions" value="854"/>
</dbReference>
<dbReference type="IntAct" id="Q01080">
    <property type="interactions" value="30"/>
</dbReference>
<dbReference type="MINT" id="Q01080"/>
<dbReference type="STRING" id="4932.YNL248C"/>
<dbReference type="iPTMnet" id="Q01080"/>
<dbReference type="PaxDb" id="4932-YNL248C"/>
<dbReference type="PeptideAtlas" id="Q01080"/>
<dbReference type="EnsemblFungi" id="YNL248C_mRNA">
    <property type="protein sequence ID" value="YNL248C"/>
    <property type="gene ID" value="YNL248C"/>
</dbReference>
<dbReference type="GeneID" id="855473"/>
<dbReference type="KEGG" id="sce:YNL248C"/>
<dbReference type="AGR" id="SGD:S000005192"/>
<dbReference type="SGD" id="S000005192">
    <property type="gene designation" value="RPA49"/>
</dbReference>
<dbReference type="VEuPathDB" id="FungiDB:YNL248C"/>
<dbReference type="eggNOG" id="KOG4183">
    <property type="taxonomic scope" value="Eukaryota"/>
</dbReference>
<dbReference type="GeneTree" id="ENSGT00390000018004"/>
<dbReference type="HOGENOM" id="CLU_034953_2_0_1"/>
<dbReference type="InParanoid" id="Q01080"/>
<dbReference type="OMA" id="DVYPFDE"/>
<dbReference type="OrthoDB" id="532500at2759"/>
<dbReference type="BioCyc" id="YEAST:G3O-33245-MONOMER"/>
<dbReference type="Reactome" id="R-SCE-73762">
    <property type="pathway name" value="RNA Polymerase I Transcription Initiation"/>
</dbReference>
<dbReference type="Reactome" id="R-SCE-73772">
    <property type="pathway name" value="RNA Polymerase I Promoter Escape"/>
</dbReference>
<dbReference type="BioGRID-ORCS" id="855473">
    <property type="hits" value="0 hits in 10 CRISPR screens"/>
</dbReference>
<dbReference type="CD-CODE" id="BDAE0F88">
    <property type="entry name" value="Nucleolus"/>
</dbReference>
<dbReference type="EvolutionaryTrace" id="Q01080"/>
<dbReference type="PRO" id="PR:Q01080"/>
<dbReference type="Proteomes" id="UP000002311">
    <property type="component" value="Chromosome XIV"/>
</dbReference>
<dbReference type="RNAct" id="Q01080">
    <property type="molecule type" value="protein"/>
</dbReference>
<dbReference type="GO" id="GO:0005730">
    <property type="term" value="C:nucleolus"/>
    <property type="evidence" value="ECO:0000314"/>
    <property type="project" value="SGD"/>
</dbReference>
<dbReference type="GO" id="GO:0005634">
    <property type="term" value="C:nucleus"/>
    <property type="evidence" value="ECO:0000314"/>
    <property type="project" value="ComplexPortal"/>
</dbReference>
<dbReference type="GO" id="GO:0005736">
    <property type="term" value="C:RNA polymerase I complex"/>
    <property type="evidence" value="ECO:0000314"/>
    <property type="project" value="UniProtKB"/>
</dbReference>
<dbReference type="GO" id="GO:0003677">
    <property type="term" value="F:DNA binding"/>
    <property type="evidence" value="ECO:0000314"/>
    <property type="project" value="DisProt"/>
</dbReference>
<dbReference type="GO" id="GO:0003899">
    <property type="term" value="F:DNA-directed RNA polymerase activity"/>
    <property type="evidence" value="ECO:0000314"/>
    <property type="project" value="UniProtKB"/>
</dbReference>
<dbReference type="GO" id="GO:0042790">
    <property type="term" value="P:nucleolar large rRNA transcription by RNA polymerase I"/>
    <property type="evidence" value="ECO:0000314"/>
    <property type="project" value="ComplexPortal"/>
</dbReference>
<dbReference type="GO" id="GO:0008361">
    <property type="term" value="P:regulation of cell size"/>
    <property type="evidence" value="ECO:0007001"/>
    <property type="project" value="SGD"/>
</dbReference>
<dbReference type="GO" id="GO:0042254">
    <property type="term" value="P:ribosome biogenesis"/>
    <property type="evidence" value="ECO:0007669"/>
    <property type="project" value="UniProtKB-KW"/>
</dbReference>
<dbReference type="GO" id="GO:0001188">
    <property type="term" value="P:RNA polymerase I preinitiation complex assembly"/>
    <property type="evidence" value="ECO:0000318"/>
    <property type="project" value="GO_Central"/>
</dbReference>
<dbReference type="GO" id="GO:0006363">
    <property type="term" value="P:termination of RNA polymerase I transcription"/>
    <property type="evidence" value="ECO:0000314"/>
    <property type="project" value="ComplexPortal"/>
</dbReference>
<dbReference type="GO" id="GO:0006360">
    <property type="term" value="P:transcription by RNA polymerase I"/>
    <property type="evidence" value="ECO:0000314"/>
    <property type="project" value="UniProtKB"/>
</dbReference>
<dbReference type="GO" id="GO:0006362">
    <property type="term" value="P:transcription elongation by RNA polymerase I"/>
    <property type="evidence" value="ECO:0000314"/>
    <property type="project" value="ComplexPortal"/>
</dbReference>
<dbReference type="GO" id="GO:0006361">
    <property type="term" value="P:transcription initiation at RNA polymerase I promoter"/>
    <property type="evidence" value="ECO:0000314"/>
    <property type="project" value="ComplexPortal"/>
</dbReference>
<dbReference type="DisProt" id="DP02519"/>
<dbReference type="InterPro" id="IPR009668">
    <property type="entry name" value="RNA_pol-assoc_fac_A49-like"/>
</dbReference>
<dbReference type="PANTHER" id="PTHR14440">
    <property type="entry name" value="DNA-DIRECTED RNA POLYMERASE I SUBUNIT RPA49"/>
    <property type="match status" value="1"/>
</dbReference>
<dbReference type="Pfam" id="PF06870">
    <property type="entry name" value="RNA_pol_I_A49"/>
    <property type="match status" value="1"/>
</dbReference>
<name>RPA49_YEAST</name>
<evidence type="ECO:0000269" key="1">
    <source>
    </source>
</evidence>
<evidence type="ECO:0000269" key="2">
    <source>
    </source>
</evidence>
<evidence type="ECO:0000269" key="3">
    <source>
    </source>
</evidence>
<evidence type="ECO:0000269" key="4">
    <source>
    </source>
</evidence>
<evidence type="ECO:0000269" key="5">
    <source>
    </source>
</evidence>
<evidence type="ECO:0000269" key="6">
    <source>
    </source>
</evidence>
<evidence type="ECO:0000269" key="7">
    <source>
    </source>
</evidence>
<evidence type="ECO:0000305" key="8"/>
<evidence type="ECO:0007744" key="9">
    <source>
    </source>
</evidence>
<evidence type="ECO:0007744" key="10">
    <source>
    </source>
</evidence>
<evidence type="ECO:0007829" key="11">
    <source>
        <dbReference type="PDB" id="3NFI"/>
    </source>
</evidence>
<evidence type="ECO:0007829" key="12">
    <source>
        <dbReference type="PDB" id="4C2M"/>
    </source>
</evidence>
<evidence type="ECO:0007829" key="13">
    <source>
        <dbReference type="PDB" id="6RQL"/>
    </source>
</evidence>
<evidence type="ECO:0007829" key="14">
    <source>
        <dbReference type="PDB" id="6RUI"/>
    </source>
</evidence>
<evidence type="ECO:0007829" key="15">
    <source>
        <dbReference type="PDB" id="6RUO"/>
    </source>
</evidence>
<evidence type="ECO:0007829" key="16">
    <source>
        <dbReference type="PDB" id="6RWE"/>
    </source>
</evidence>
<keyword id="KW-0002">3D-structure</keyword>
<keyword id="KW-0238">DNA-binding</keyword>
<keyword id="KW-0240">DNA-directed RNA polymerase</keyword>
<keyword id="KW-0548">Nucleotidyltransferase</keyword>
<keyword id="KW-0539">Nucleus</keyword>
<keyword id="KW-0597">Phosphoprotein</keyword>
<keyword id="KW-1185">Reference proteome</keyword>
<keyword id="KW-0690">Ribosome biogenesis</keyword>
<keyword id="KW-0804">Transcription</keyword>
<keyword id="KW-0808">Transferase</keyword>
<reference key="1">
    <citation type="journal article" date="1992" name="Proc. Natl. Acad. Sci. U.S.A.">
        <title>Characterization and mutagenesis of the gene encoding the A49 subunit of RNA polymerase A in Saccharomyces cerevisiae.</title>
        <authorList>
            <person name="Liljelund P."/>
            <person name="Mariotte S."/>
            <person name="Buhler J.-M."/>
            <person name="Sentenac A."/>
        </authorList>
    </citation>
    <scope>NUCLEOTIDE SEQUENCE [GENOMIC DNA]</scope>
    <source>
        <strain>CMY214</strain>
    </source>
</reference>
<reference key="2">
    <citation type="journal article" date="1997" name="Yeast">
        <title>Sequence analysis of the 33 kb long region between ORC5 and SUI1 from the left arm of chromosome XIV from Saccharomyces cerevisiae.</title>
        <authorList>
            <person name="Sen-Gupta M."/>
            <person name="Gueldener U."/>
            <person name="Beinhauer J.D."/>
            <person name="Fiedler T.A."/>
            <person name="Hegemann J.H."/>
        </authorList>
    </citation>
    <scope>NUCLEOTIDE SEQUENCE [GENOMIC DNA]</scope>
    <source>
        <strain>ATCC 96604 / S288c / FY1679</strain>
    </source>
</reference>
<reference key="3">
    <citation type="journal article" date="1997" name="Nature">
        <title>The nucleotide sequence of Saccharomyces cerevisiae chromosome XIV and its evolutionary implications.</title>
        <authorList>
            <person name="Philippsen P."/>
            <person name="Kleine K."/>
            <person name="Poehlmann R."/>
            <person name="Duesterhoeft A."/>
            <person name="Hamberg K."/>
            <person name="Hegemann J.H."/>
            <person name="Obermaier B."/>
            <person name="Urrestarazu L.A."/>
            <person name="Aert R."/>
            <person name="Albermann K."/>
            <person name="Altmann R."/>
            <person name="Andre B."/>
            <person name="Baladron V."/>
            <person name="Ballesta J.P.G."/>
            <person name="Becam A.-M."/>
            <person name="Beinhauer J.D."/>
            <person name="Boskovic J."/>
            <person name="Buitrago M.J."/>
            <person name="Bussereau F."/>
            <person name="Coster F."/>
            <person name="Crouzet M."/>
            <person name="D'Angelo M."/>
            <person name="Dal Pero F."/>
            <person name="De Antoni A."/>
            <person name="del Rey F."/>
            <person name="Doignon F."/>
            <person name="Domdey H."/>
            <person name="Dubois E."/>
            <person name="Fiedler T.A."/>
            <person name="Fleig U."/>
            <person name="Floeth M."/>
            <person name="Fritz C."/>
            <person name="Gaillardin C."/>
            <person name="Garcia-Cantalejo J.M."/>
            <person name="Glansdorff N."/>
            <person name="Goffeau A."/>
            <person name="Gueldener U."/>
            <person name="Herbert C.J."/>
            <person name="Heumann K."/>
            <person name="Heuss-Neitzel D."/>
            <person name="Hilbert H."/>
            <person name="Hinni K."/>
            <person name="Iraqui Houssaini I."/>
            <person name="Jacquet M."/>
            <person name="Jimenez A."/>
            <person name="Jonniaux J.-L."/>
            <person name="Karpfinger-Hartl L."/>
            <person name="Lanfranchi G."/>
            <person name="Lepingle A."/>
            <person name="Levesque H."/>
            <person name="Lyck R."/>
            <person name="Maftahi M."/>
            <person name="Mallet L."/>
            <person name="Maurer C.T.C."/>
            <person name="Messenguy F."/>
            <person name="Mewes H.-W."/>
            <person name="Moestl D."/>
            <person name="Nasr F."/>
            <person name="Nicaud J.-M."/>
            <person name="Niedenthal R.K."/>
            <person name="Pandolfo D."/>
            <person name="Pierard A."/>
            <person name="Piravandi E."/>
            <person name="Planta R.J."/>
            <person name="Pohl T.M."/>
            <person name="Purnelle B."/>
            <person name="Rebischung C."/>
            <person name="Remacha M.A."/>
            <person name="Revuelta J.L."/>
            <person name="Rinke M."/>
            <person name="Saiz J.E."/>
            <person name="Sartorello F."/>
            <person name="Scherens B."/>
            <person name="Sen-Gupta M."/>
            <person name="Soler-Mira A."/>
            <person name="Urbanus J.H.M."/>
            <person name="Valle G."/>
            <person name="Van Dyck L."/>
            <person name="Verhasselt P."/>
            <person name="Vierendeels F."/>
            <person name="Vissers S."/>
            <person name="Voet M."/>
            <person name="Volckaert G."/>
            <person name="Wach A."/>
            <person name="Wambutt R."/>
            <person name="Wedler H."/>
            <person name="Zollner A."/>
            <person name="Hani J."/>
        </authorList>
    </citation>
    <scope>NUCLEOTIDE SEQUENCE [LARGE SCALE GENOMIC DNA]</scope>
    <source>
        <strain>ATCC 204508 / S288c</strain>
    </source>
</reference>
<reference key="4">
    <citation type="journal article" date="2014" name="G3 (Bethesda)">
        <title>The reference genome sequence of Saccharomyces cerevisiae: Then and now.</title>
        <authorList>
            <person name="Engel S.R."/>
            <person name="Dietrich F.S."/>
            <person name="Fisk D.G."/>
            <person name="Binkley G."/>
            <person name="Balakrishnan R."/>
            <person name="Costanzo M.C."/>
            <person name="Dwight S.S."/>
            <person name="Hitz B.C."/>
            <person name="Karra K."/>
            <person name="Nash R.S."/>
            <person name="Weng S."/>
            <person name="Wong E.D."/>
            <person name="Lloyd P."/>
            <person name="Skrzypek M.S."/>
            <person name="Miyasato S.R."/>
            <person name="Simison M."/>
            <person name="Cherry J.M."/>
        </authorList>
    </citation>
    <scope>GENOME REANNOTATION</scope>
    <source>
        <strain>ATCC 204508 / S288c</strain>
    </source>
</reference>
<reference key="5">
    <citation type="journal article" date="2007" name="Genome Res.">
        <title>Approaching a complete repository of sequence-verified protein-encoding clones for Saccharomyces cerevisiae.</title>
        <authorList>
            <person name="Hu Y."/>
            <person name="Rolfs A."/>
            <person name="Bhullar B."/>
            <person name="Murthy T.V.S."/>
            <person name="Zhu C."/>
            <person name="Berger M.F."/>
            <person name="Camargo A.A."/>
            <person name="Kelley F."/>
            <person name="McCarron S."/>
            <person name="Jepson D."/>
            <person name="Richardson A."/>
            <person name="Raphael J."/>
            <person name="Moreira D."/>
            <person name="Taycher E."/>
            <person name="Zuo D."/>
            <person name="Mohr S."/>
            <person name="Kane M.F."/>
            <person name="Williamson J."/>
            <person name="Simpson A.J.G."/>
            <person name="Bulyk M.L."/>
            <person name="Harlow E."/>
            <person name="Marsischky G."/>
            <person name="Kolodner R.D."/>
            <person name="LaBaer J."/>
        </authorList>
    </citation>
    <scope>NUCLEOTIDE SEQUENCE [GENOMIC DNA]</scope>
    <source>
        <strain>ATCC 204508 / S288c</strain>
    </source>
</reference>
<reference key="6">
    <citation type="journal article" date="2001" name="Proc. Natl. Acad. Sci. U.S.A.">
        <title>Differential roles of phosphorylation in the formation of transcriptional active RNA polymerase I.</title>
        <authorList>
            <person name="Fath S."/>
            <person name="Milkereit P."/>
            <person name="Peyroche G."/>
            <person name="Riva M."/>
            <person name="Carles C."/>
            <person name="Tschochner H."/>
        </authorList>
    </citation>
    <scope>IDENTIFICATION IN THE RNA POL I COMPLEX</scope>
</reference>
<reference key="7">
    <citation type="journal article" date="2008" name="Mol. Cell. Proteomics">
        <title>A multidimensional chromatography technology for in-depth phosphoproteome analysis.</title>
        <authorList>
            <person name="Albuquerque C.P."/>
            <person name="Smolka M.B."/>
            <person name="Payne S.H."/>
            <person name="Bafna V."/>
            <person name="Eng J."/>
            <person name="Zhou H."/>
        </authorList>
    </citation>
    <scope>PHOSPHORYLATION [LARGE SCALE ANALYSIS] AT SER-34</scope>
    <scope>IDENTIFICATION BY MASS SPECTROMETRY [LARGE SCALE ANALYSIS]</scope>
</reference>
<reference key="8">
    <citation type="journal article" date="2009" name="Science">
        <title>Global analysis of Cdk1 substrate phosphorylation sites provides insights into evolution.</title>
        <authorList>
            <person name="Holt L.J."/>
            <person name="Tuch B.B."/>
            <person name="Villen J."/>
            <person name="Johnson A.D."/>
            <person name="Gygi S.P."/>
            <person name="Morgan D.O."/>
        </authorList>
    </citation>
    <scope>PHOSPHORYLATION [LARGE SCALE ANALYSIS] AT SER-151</scope>
    <scope>IDENTIFICATION BY MASS SPECTROMETRY [LARGE SCALE ANALYSIS]</scope>
</reference>
<reference key="9">
    <citation type="journal article" date="2002" name="EMBO J.">
        <title>Localization of the yeast RNA polymerase I-specific subunits.</title>
        <authorList>
            <person name="Bischler N."/>
            <person name="Brino L."/>
            <person name="Carles C."/>
            <person name="Riva M."/>
            <person name="Tschochner H."/>
            <person name="Mallouh V."/>
            <person name="Schultz P."/>
        </authorList>
    </citation>
    <scope>ELECTRON MICROSCOPY OF THE RNA POL I COMPLEX</scope>
</reference>
<reference key="10">
    <citation type="journal article" date="2002" name="Proc. Natl. Acad. Sci. U.S.A.">
        <title>The A14-A43 heterodimer subunit in yeast RNA pol I and their relationship to Rpb4-Rpb7 pol II subunits.</title>
        <authorList>
            <person name="Peyroche G."/>
            <person name="Levillain E."/>
            <person name="Siaut M."/>
            <person name="Callebaut I."/>
            <person name="Schultz P."/>
            <person name="Sentenac A."/>
            <person name="Riva M."/>
            <person name="Carles C."/>
        </authorList>
    </citation>
    <scope>IDENTIFICATION IN THE RNA POL I COMPLEX</scope>
</reference>
<reference key="11">
    <citation type="journal article" date="2003" name="Nature">
        <title>Global analysis of protein localization in budding yeast.</title>
        <authorList>
            <person name="Huh W.-K."/>
            <person name="Falvo J.V."/>
            <person name="Gerke L.C."/>
            <person name="Carroll A.S."/>
            <person name="Howson R.W."/>
            <person name="Weissman J.S."/>
            <person name="O'Shea E.K."/>
        </authorList>
    </citation>
    <scope>SUBCELLULAR LOCATION [LARGE SCALE ANALYSIS]</scope>
</reference>
<reference key="12">
    <citation type="journal article" date="2007" name="Cell">
        <title>Functional architecture of RNA polymerase I.</title>
        <authorList>
            <person name="Kuhn C.D."/>
            <person name="Geiger S.R."/>
            <person name="Baumli S."/>
            <person name="Gartmann M."/>
            <person name="Gerber J."/>
            <person name="Jennebach S."/>
            <person name="Mielke T."/>
            <person name="Tschochner H."/>
            <person name="Beckmann R."/>
            <person name="Cramer P."/>
        </authorList>
    </citation>
    <scope>STRUCTURE BY ELECTRON MICROSCOPY (12.00 ANGSTROMS) OF THE POL I COMPLEX</scope>
    <scope>FUNCTION</scope>
    <scope>SUBUNIT</scope>
</reference>
<reference key="13">
    <citation type="journal article" date="2010" name="Mol. Cell">
        <title>RNA polymerase I contains a TFIIF-related DNA-binding subcomplex.</title>
        <authorList>
            <person name="Geiger S.R."/>
            <person name="Lorenzen K."/>
            <person name="Schreieck A."/>
            <person name="Hanecker P."/>
            <person name="Kostrewa D."/>
            <person name="Heck A.J."/>
            <person name="Cramer P."/>
        </authorList>
    </citation>
    <scope>X-RAY CRYSTALLOGRAPHY (1.9 ANGSTROMS) OF 171-403</scope>
    <scope>FUNCTION</scope>
    <scope>INTERACTION WITH RPA34</scope>
    <scope>DNA-BINDING</scope>
    <scope>MUTAGENESIS OF 325-ASP-GLU-326; LYS-356; SER-358; LYS-359; ARG-365 AND LYS-393</scope>
    <scope>IDENTIFICATION BY MASS SPECTROMETRY</scope>
    <scope>SUBUNIT</scope>
</reference>
<reference key="14">
    <citation type="journal article" date="2013" name="Nature">
        <title>Crystal structure of the 14-subunit RNA polymerase I.</title>
        <authorList>
            <person name="Fernandez-Tornero C."/>
            <person name="Moreno-Morcillo M."/>
            <person name="Rashid U.J."/>
            <person name="Taylor N.M."/>
            <person name="Ruiz F.M."/>
            <person name="Gruene T."/>
            <person name="Legrand P."/>
            <person name="Steuerwald U."/>
            <person name="Muller C.W."/>
        </authorList>
    </citation>
    <scope>X-RAY CRYSTALLOGRAPHY (3.0 ANGSTROMS) OF THE POL I COMPLEX</scope>
    <scope>FUNCTION</scope>
    <scope>SUBUNIT</scope>
</reference>
<reference key="15">
    <citation type="journal article" date="2013" name="Nature">
        <title>RNA polymerase I structure and transcription regulation.</title>
        <authorList>
            <person name="Engel C."/>
            <person name="Sainsbury S."/>
            <person name="Cheung A.C."/>
            <person name="Kostrewa D."/>
            <person name="Cramer P."/>
        </authorList>
    </citation>
    <scope>X-RAY CRYSTALLOGRAPHY (2.8 ANGSTROMS) OF THE POL I COMPLEX</scope>
    <scope>FUNCTION</scope>
    <scope>SUBUNIT</scope>
</reference>